<feature type="chain" id="PRO_1000142264" description="Large ribosomal subunit protein uL22">
    <location>
        <begin position="1"/>
        <end position="110"/>
    </location>
</feature>
<protein>
    <recommendedName>
        <fullName evidence="1">Large ribosomal subunit protein uL22</fullName>
    </recommendedName>
    <alternativeName>
        <fullName evidence="2">50S ribosomal protein L22</fullName>
    </alternativeName>
</protein>
<keyword id="KW-1185">Reference proteome</keyword>
<keyword id="KW-0687">Ribonucleoprotein</keyword>
<keyword id="KW-0689">Ribosomal protein</keyword>
<keyword id="KW-0694">RNA-binding</keyword>
<keyword id="KW-0699">rRNA-binding</keyword>
<name>RL22_EXIS2</name>
<evidence type="ECO:0000255" key="1">
    <source>
        <dbReference type="HAMAP-Rule" id="MF_01331"/>
    </source>
</evidence>
<evidence type="ECO:0000305" key="2"/>
<gene>
    <name evidence="1" type="primary">rplV</name>
    <name type="ordered locus">Exig_0101</name>
</gene>
<sequence>MQSKASANMVRIAPRKARLVVDLIRGKQIGEALSILAYTNKAATPIVEKVLKSAIANAEHNFDMNIENLVVTEAYVNEGPTLKRFRPRAMGRASRINKRTSHVHIVVSEK</sequence>
<comment type="function">
    <text evidence="1">This protein binds specifically to 23S rRNA; its binding is stimulated by other ribosomal proteins, e.g. L4, L17, and L20. It is important during the early stages of 50S assembly. It makes multiple contacts with different domains of the 23S rRNA in the assembled 50S subunit and ribosome (By similarity).</text>
</comment>
<comment type="function">
    <text evidence="1">The globular domain of the protein is located near the polypeptide exit tunnel on the outside of the subunit, while an extended beta-hairpin is found that lines the wall of the exit tunnel in the center of the 70S ribosome.</text>
</comment>
<comment type="subunit">
    <text evidence="1">Part of the 50S ribosomal subunit.</text>
</comment>
<comment type="similarity">
    <text evidence="1">Belongs to the universal ribosomal protein uL22 family.</text>
</comment>
<reference key="1">
    <citation type="submission" date="2008-04" db="EMBL/GenBank/DDBJ databases">
        <title>Complete sequence of chromosome of Exiguobacterium sibiricum 255-15.</title>
        <authorList>
            <consortium name="US DOE Joint Genome Institute"/>
            <person name="Copeland A."/>
            <person name="Lucas S."/>
            <person name="Lapidus A."/>
            <person name="Glavina del Rio T."/>
            <person name="Dalin E."/>
            <person name="Tice H."/>
            <person name="Bruce D."/>
            <person name="Goodwin L."/>
            <person name="Pitluck S."/>
            <person name="Kiss H."/>
            <person name="Chertkov O."/>
            <person name="Monk C."/>
            <person name="Brettin T."/>
            <person name="Detter J.C."/>
            <person name="Han C."/>
            <person name="Kuske C.R."/>
            <person name="Schmutz J."/>
            <person name="Larimer F."/>
            <person name="Land M."/>
            <person name="Hauser L."/>
            <person name="Kyrpides N."/>
            <person name="Mikhailova N."/>
            <person name="Vishnivetskaya T."/>
            <person name="Rodrigues D.F."/>
            <person name="Gilichinsky D."/>
            <person name="Tiedje J."/>
            <person name="Richardson P."/>
        </authorList>
    </citation>
    <scope>NUCLEOTIDE SEQUENCE [LARGE SCALE GENOMIC DNA]</scope>
    <source>
        <strain>DSM 17290 / CCUG 55495 / CIP 109462 / JCM 13490 / 255-15</strain>
    </source>
</reference>
<dbReference type="EMBL" id="CP001022">
    <property type="protein sequence ID" value="ACB59588.1"/>
    <property type="molecule type" value="Genomic_DNA"/>
</dbReference>
<dbReference type="RefSeq" id="WP_012369014.1">
    <property type="nucleotide sequence ID" value="NC_010556.1"/>
</dbReference>
<dbReference type="SMR" id="B1YGV5"/>
<dbReference type="STRING" id="262543.Exig_0101"/>
<dbReference type="GeneID" id="90838853"/>
<dbReference type="KEGG" id="esi:Exig_0101"/>
<dbReference type="eggNOG" id="COG0091">
    <property type="taxonomic scope" value="Bacteria"/>
</dbReference>
<dbReference type="HOGENOM" id="CLU_083987_3_3_9"/>
<dbReference type="OrthoDB" id="9805969at2"/>
<dbReference type="Proteomes" id="UP000001681">
    <property type="component" value="Chromosome"/>
</dbReference>
<dbReference type="GO" id="GO:0022625">
    <property type="term" value="C:cytosolic large ribosomal subunit"/>
    <property type="evidence" value="ECO:0007669"/>
    <property type="project" value="TreeGrafter"/>
</dbReference>
<dbReference type="GO" id="GO:0019843">
    <property type="term" value="F:rRNA binding"/>
    <property type="evidence" value="ECO:0007669"/>
    <property type="project" value="UniProtKB-UniRule"/>
</dbReference>
<dbReference type="GO" id="GO:0003735">
    <property type="term" value="F:structural constituent of ribosome"/>
    <property type="evidence" value="ECO:0007669"/>
    <property type="project" value="InterPro"/>
</dbReference>
<dbReference type="GO" id="GO:0006412">
    <property type="term" value="P:translation"/>
    <property type="evidence" value="ECO:0007669"/>
    <property type="project" value="UniProtKB-UniRule"/>
</dbReference>
<dbReference type="CDD" id="cd00336">
    <property type="entry name" value="Ribosomal_L22"/>
    <property type="match status" value="1"/>
</dbReference>
<dbReference type="FunFam" id="3.90.470.10:FF:000001">
    <property type="entry name" value="50S ribosomal protein L22"/>
    <property type="match status" value="1"/>
</dbReference>
<dbReference type="Gene3D" id="3.90.470.10">
    <property type="entry name" value="Ribosomal protein L22/L17"/>
    <property type="match status" value="1"/>
</dbReference>
<dbReference type="HAMAP" id="MF_01331_B">
    <property type="entry name" value="Ribosomal_uL22_B"/>
    <property type="match status" value="1"/>
</dbReference>
<dbReference type="InterPro" id="IPR001063">
    <property type="entry name" value="Ribosomal_uL22"/>
</dbReference>
<dbReference type="InterPro" id="IPR005727">
    <property type="entry name" value="Ribosomal_uL22_bac/chlpt-type"/>
</dbReference>
<dbReference type="InterPro" id="IPR047867">
    <property type="entry name" value="Ribosomal_uL22_bac/org-type"/>
</dbReference>
<dbReference type="InterPro" id="IPR018260">
    <property type="entry name" value="Ribosomal_uL22_CS"/>
</dbReference>
<dbReference type="InterPro" id="IPR036394">
    <property type="entry name" value="Ribosomal_uL22_sf"/>
</dbReference>
<dbReference type="NCBIfam" id="TIGR01044">
    <property type="entry name" value="rplV_bact"/>
    <property type="match status" value="1"/>
</dbReference>
<dbReference type="PANTHER" id="PTHR13501">
    <property type="entry name" value="CHLOROPLAST 50S RIBOSOMAL PROTEIN L22-RELATED"/>
    <property type="match status" value="1"/>
</dbReference>
<dbReference type="PANTHER" id="PTHR13501:SF8">
    <property type="entry name" value="LARGE RIBOSOMAL SUBUNIT PROTEIN UL22M"/>
    <property type="match status" value="1"/>
</dbReference>
<dbReference type="Pfam" id="PF00237">
    <property type="entry name" value="Ribosomal_L22"/>
    <property type="match status" value="1"/>
</dbReference>
<dbReference type="SUPFAM" id="SSF54843">
    <property type="entry name" value="Ribosomal protein L22"/>
    <property type="match status" value="1"/>
</dbReference>
<dbReference type="PROSITE" id="PS00464">
    <property type="entry name" value="RIBOSOMAL_L22"/>
    <property type="match status" value="1"/>
</dbReference>
<proteinExistence type="inferred from homology"/>
<organism>
    <name type="scientific">Exiguobacterium sibiricum (strain DSM 17290 / CCUG 55495 / CIP 109462 / JCM 13490 / 255-15)</name>
    <dbReference type="NCBI Taxonomy" id="262543"/>
    <lineage>
        <taxon>Bacteria</taxon>
        <taxon>Bacillati</taxon>
        <taxon>Bacillota</taxon>
        <taxon>Bacilli</taxon>
        <taxon>Bacillales</taxon>
        <taxon>Bacillales Family XII. Incertae Sedis</taxon>
        <taxon>Exiguobacterium</taxon>
    </lineage>
</organism>
<accession>B1YGV5</accession>